<comment type="function">
    <text evidence="5 6 7 8">V region of the variable domain of immunoglobulin light chains that participates in the antigen recognition (PubMed:24600447). Immunoglobulins, also known as antibodies, are membrane-bound or secreted glycoproteins produced by B lymphocytes. In the recognition phase of humoral immunity, the membrane-bound immunoglobulins serve as receptors which, upon binding of a specific antigen, trigger the clonal expansion and differentiation of B lymphocytes into immunoglobulins-secreting plasma cells. Secreted immunoglobulins mediate the effector phase of humoral immunity, which results in the elimination of bound antigens (PubMed:20176268, PubMed:22158414). The antigen binding site is formed by the variable domain of one heavy chain, together with that of its associated light chain. Thus, each immunoglobulin has two antigen binding sites with remarkable affinity for a particular antigen. The variable domains are assembled by a process called V-(D)-J rearrangement and can then be subjected to somatic hypermutations which, after exposure to antigen and selection, allow affinity maturation for a particular antigen (PubMed:17576170, PubMed:20176268).</text>
</comment>
<comment type="subunit">
    <text evidence="6">Immunoglobulins are composed of two identical heavy chains and two identical light chains; disulfide-linked.</text>
</comment>
<comment type="subcellular location">
    <subcellularLocation>
        <location evidence="6 7">Secreted</location>
    </subcellularLocation>
    <subcellularLocation>
        <location evidence="6 7">Cell membrane</location>
    </subcellularLocation>
</comment>
<comment type="polymorphism">
    <text>There are several alleles. The sequence shown is that of IMGT allele IGKV1D-8*01.</text>
</comment>
<comment type="caution">
    <text evidence="10">For an example of a full-length immunoglobulin kappa light chain see AC P0DOX7.</text>
</comment>
<sequence>MDMRVPAQLLGLLLLWLPGARCAIWMTQSPSLLSASTGDRVTISCRMSQGISSYLAWYQQKPGKAPELLIYAASTLQSGVPSRFSGSGSGTDFTLTISCLQSEDFATYYCQQYYSFP</sequence>
<reference key="1">
    <citation type="journal article" date="2005" name="Nature">
        <title>Generation and annotation of the DNA sequences of human chromosomes 2 and 4.</title>
        <authorList>
            <person name="Hillier L.W."/>
            <person name="Graves T.A."/>
            <person name="Fulton R.S."/>
            <person name="Fulton L.A."/>
            <person name="Pepin K.H."/>
            <person name="Minx P."/>
            <person name="Wagner-McPherson C."/>
            <person name="Layman D."/>
            <person name="Wylie K."/>
            <person name="Sekhon M."/>
            <person name="Becker M.C."/>
            <person name="Fewell G.A."/>
            <person name="Delehaunty K.D."/>
            <person name="Miner T.L."/>
            <person name="Nash W.E."/>
            <person name="Kremitzki C."/>
            <person name="Oddy L."/>
            <person name="Du H."/>
            <person name="Sun H."/>
            <person name="Bradshaw-Cordum H."/>
            <person name="Ali J."/>
            <person name="Carter J."/>
            <person name="Cordes M."/>
            <person name="Harris A."/>
            <person name="Isak A."/>
            <person name="van Brunt A."/>
            <person name="Nguyen C."/>
            <person name="Du F."/>
            <person name="Courtney L."/>
            <person name="Kalicki J."/>
            <person name="Ozersky P."/>
            <person name="Abbott S."/>
            <person name="Armstrong J."/>
            <person name="Belter E.A."/>
            <person name="Caruso L."/>
            <person name="Cedroni M."/>
            <person name="Cotton M."/>
            <person name="Davidson T."/>
            <person name="Desai A."/>
            <person name="Elliott G."/>
            <person name="Erb T."/>
            <person name="Fronick C."/>
            <person name="Gaige T."/>
            <person name="Haakenson W."/>
            <person name="Haglund K."/>
            <person name="Holmes A."/>
            <person name="Harkins R."/>
            <person name="Kim K."/>
            <person name="Kruchowski S.S."/>
            <person name="Strong C.M."/>
            <person name="Grewal N."/>
            <person name="Goyea E."/>
            <person name="Hou S."/>
            <person name="Levy A."/>
            <person name="Martinka S."/>
            <person name="Mead K."/>
            <person name="McLellan M.D."/>
            <person name="Meyer R."/>
            <person name="Randall-Maher J."/>
            <person name="Tomlinson C."/>
            <person name="Dauphin-Kohlberg S."/>
            <person name="Kozlowicz-Reilly A."/>
            <person name="Shah N."/>
            <person name="Swearengen-Shahid S."/>
            <person name="Snider J."/>
            <person name="Strong J.T."/>
            <person name="Thompson J."/>
            <person name="Yoakum M."/>
            <person name="Leonard S."/>
            <person name="Pearman C."/>
            <person name="Trani L."/>
            <person name="Radionenko M."/>
            <person name="Waligorski J.E."/>
            <person name="Wang C."/>
            <person name="Rock S.M."/>
            <person name="Tin-Wollam A.-M."/>
            <person name="Maupin R."/>
            <person name="Latreille P."/>
            <person name="Wendl M.C."/>
            <person name="Yang S.-P."/>
            <person name="Pohl C."/>
            <person name="Wallis J.W."/>
            <person name="Spieth J."/>
            <person name="Bieri T.A."/>
            <person name="Berkowicz N."/>
            <person name="Nelson J.O."/>
            <person name="Osborne J."/>
            <person name="Ding L."/>
            <person name="Meyer R."/>
            <person name="Sabo A."/>
            <person name="Shotland Y."/>
            <person name="Sinha P."/>
            <person name="Wohldmann P.E."/>
            <person name="Cook L.L."/>
            <person name="Hickenbotham M.T."/>
            <person name="Eldred J."/>
            <person name="Williams D."/>
            <person name="Jones T.A."/>
            <person name="She X."/>
            <person name="Ciccarelli F.D."/>
            <person name="Izaurralde E."/>
            <person name="Taylor J."/>
            <person name="Schmutz J."/>
            <person name="Myers R.M."/>
            <person name="Cox D.R."/>
            <person name="Huang X."/>
            <person name="McPherson J.D."/>
            <person name="Mardis E.R."/>
            <person name="Clifton S.W."/>
            <person name="Warren W.C."/>
            <person name="Chinwalla A.T."/>
            <person name="Eddy S.R."/>
            <person name="Marra M.A."/>
            <person name="Ovcharenko I."/>
            <person name="Furey T.S."/>
            <person name="Miller W."/>
            <person name="Eichler E.E."/>
            <person name="Bork P."/>
            <person name="Suyama M."/>
            <person name="Torrents D."/>
            <person name="Waterston R.H."/>
            <person name="Wilson R.K."/>
        </authorList>
    </citation>
    <scope>NUCLEOTIDE SEQUENCE [LARGE SCALE GENOMIC DNA] (IMGT ALLELE IGKV1D-8*01)</scope>
</reference>
<reference key="2">
    <citation type="journal article" date="2001" name="Exp. Clin. Immunogenet.">
        <title>Nomenclature of the human immunoglobulin kappa (IGK) genes.</title>
        <authorList>
            <person name="Lefranc M.P."/>
        </authorList>
    </citation>
    <scope>NOMEMCLATURE</scope>
</reference>
<reference key="3">
    <citation type="book" date="2001" name="The Immunoglobulin FactsBook.">
        <title>The Immunoglobulin FactsBook.</title>
        <editorList>
            <person name="Lefranc M.P."/>
            <person name="Lefranc G."/>
        </editorList>
        <authorList>
            <person name="Lefranc M.P."/>
            <person name="Lefranc G."/>
        </authorList>
    </citation>
    <scope>NOMENCLATURE</scope>
</reference>
<reference key="4">
    <citation type="journal article" date="2007" name="Annu. Rev. Genet.">
        <title>Immunoglobulin somatic hypermutation.</title>
        <authorList>
            <person name="Teng G."/>
            <person name="Papavasiliou F.N."/>
        </authorList>
    </citation>
    <scope>REVIEW ON SOMATIC HYPERMUTATION</scope>
</reference>
<reference key="5">
    <citation type="journal article" date="2010" name="J. Allergy Clin. Immunol.">
        <title>Structure and function of immunoglobulins.</title>
        <authorList>
            <person name="Schroeder H.W. Jr."/>
            <person name="Cavacini L."/>
        </authorList>
    </citation>
    <scope>REVIEW ON IMMUNOGLOBULINS</scope>
</reference>
<reference key="6">
    <citation type="journal article" date="2012" name="Nat. Rev. Immunol.">
        <title>Molecular programming of B cell memory.</title>
        <authorList>
            <person name="McHeyzer-Williams M."/>
            <person name="Okitsu S."/>
            <person name="Wang N."/>
            <person name="McHeyzer-Williams L."/>
        </authorList>
    </citation>
    <scope>REVIEW ON FUNCTION</scope>
</reference>
<reference key="7">
    <citation type="journal article" date="2014" name="Front. Immunol.">
        <title>Immunoglobulin and T Cell Receptor Genes: IMGT((R)) and the Birth and Rise of Immunoinformatics.</title>
        <authorList>
            <person name="Lefranc M.P."/>
        </authorList>
    </citation>
    <scope>NOMENCLATURE</scope>
</reference>
<gene>
    <name evidence="4 9" type="primary">IGKV1D-8</name>
</gene>
<accession>A0A087WSZ0</accession>
<name>KVD08_HUMAN</name>
<proteinExistence type="evidence at protein level"/>
<protein>
    <recommendedName>
        <fullName evidence="4 9">Immunoglobulin kappa variable 1D-8</fullName>
    </recommendedName>
</protein>
<evidence type="ECO:0000250" key="1">
    <source>
        <dbReference type="UniProtKB" id="P01602"/>
    </source>
</evidence>
<evidence type="ECO:0000255" key="2"/>
<evidence type="ECO:0000255" key="3">
    <source>
        <dbReference type="PROSITE-ProRule" id="PRU00114"/>
    </source>
</evidence>
<evidence type="ECO:0000303" key="4">
    <source>
    </source>
</evidence>
<evidence type="ECO:0000303" key="5">
    <source>
    </source>
</evidence>
<evidence type="ECO:0000303" key="6">
    <source>
    </source>
</evidence>
<evidence type="ECO:0000303" key="7">
    <source>
    </source>
</evidence>
<evidence type="ECO:0000303" key="8">
    <source>
    </source>
</evidence>
<evidence type="ECO:0000303" key="9">
    <source ref="3"/>
</evidence>
<evidence type="ECO:0000305" key="10"/>
<keyword id="KW-1064">Adaptive immunity</keyword>
<keyword id="KW-1003">Cell membrane</keyword>
<keyword id="KW-1015">Disulfide bond</keyword>
<keyword id="KW-0391">Immunity</keyword>
<keyword id="KW-1280">Immunoglobulin</keyword>
<keyword id="KW-0393">Immunoglobulin domain</keyword>
<keyword id="KW-0472">Membrane</keyword>
<keyword id="KW-1267">Proteomics identification</keyword>
<keyword id="KW-1185">Reference proteome</keyword>
<keyword id="KW-0964">Secreted</keyword>
<keyword id="KW-0732">Signal</keyword>
<dbReference type="EMBL" id="AC243981">
    <property type="status" value="NOT_ANNOTATED_CDS"/>
    <property type="molecule type" value="Genomic_DNA"/>
</dbReference>
<dbReference type="SMR" id="A0A087WSZ0"/>
<dbReference type="FunCoup" id="A0A087WSZ0">
    <property type="interactions" value="297"/>
</dbReference>
<dbReference type="IMGT_GENE-DB" id="IGKV1D-8"/>
<dbReference type="BioMuta" id="IGKV1D-8"/>
<dbReference type="jPOST" id="A0A087WSZ0"/>
<dbReference type="MassIVE" id="A0A087WSZ0"/>
<dbReference type="Ensembl" id="ENST00000471857.2">
    <property type="protein sequence ID" value="ENSP00000420285.2"/>
    <property type="gene ID" value="ENSG00000239819.2"/>
</dbReference>
<dbReference type="UCSC" id="uc061lse.1">
    <property type="organism name" value="human"/>
</dbReference>
<dbReference type="AGR" id="HGNC:5759"/>
<dbReference type="GeneCards" id="IGKV1D-8"/>
<dbReference type="HGNC" id="HGNC:5759">
    <property type="gene designation" value="IGKV1D-8"/>
</dbReference>
<dbReference type="HPA" id="ENSG00000239819">
    <property type="expression patterns" value="Tissue enriched (lymphoid)"/>
</dbReference>
<dbReference type="neXtProt" id="NX_A0A087WSZ0"/>
<dbReference type="OpenTargets" id="ENSG00000239819"/>
<dbReference type="VEuPathDB" id="HostDB:ENSG00000239819"/>
<dbReference type="GeneTree" id="ENSGT00940000153048"/>
<dbReference type="HOGENOM" id="CLU_077975_4_1_1"/>
<dbReference type="InParanoid" id="A0A087WSZ0"/>
<dbReference type="OMA" id="CQKHDNS"/>
<dbReference type="OrthoDB" id="9629570at2759"/>
<dbReference type="PAN-GO" id="A0A087WSZ0">
    <property type="GO annotations" value="3 GO annotations based on evolutionary models"/>
</dbReference>
<dbReference type="Pharos" id="A0A087WSZ0">
    <property type="development level" value="Tdark"/>
</dbReference>
<dbReference type="PRO" id="PR:A0A087WSZ0"/>
<dbReference type="Proteomes" id="UP000005640">
    <property type="component" value="Chromosome 2"/>
</dbReference>
<dbReference type="RNAct" id="A0A087WSZ0">
    <property type="molecule type" value="protein"/>
</dbReference>
<dbReference type="Bgee" id="ENSG00000239819">
    <property type="expression patterns" value="Expressed in duodenum and 86 other cell types or tissues"/>
</dbReference>
<dbReference type="GO" id="GO:0005576">
    <property type="term" value="C:extracellular region"/>
    <property type="evidence" value="ECO:0007669"/>
    <property type="project" value="UniProtKB-SubCell"/>
</dbReference>
<dbReference type="GO" id="GO:0019814">
    <property type="term" value="C:immunoglobulin complex"/>
    <property type="evidence" value="ECO:0000318"/>
    <property type="project" value="GO_Central"/>
</dbReference>
<dbReference type="GO" id="GO:0005886">
    <property type="term" value="C:plasma membrane"/>
    <property type="evidence" value="ECO:0007669"/>
    <property type="project" value="UniProtKB-SubCell"/>
</dbReference>
<dbReference type="GO" id="GO:0002250">
    <property type="term" value="P:adaptive immune response"/>
    <property type="evidence" value="ECO:0007669"/>
    <property type="project" value="UniProtKB-KW"/>
</dbReference>
<dbReference type="GO" id="GO:0006955">
    <property type="term" value="P:immune response"/>
    <property type="evidence" value="ECO:0000318"/>
    <property type="project" value="GO_Central"/>
</dbReference>
<dbReference type="FunFam" id="2.60.40.10:FF:000212">
    <property type="entry name" value="Immunoglobulin kappa chain variable 12-38"/>
    <property type="match status" value="1"/>
</dbReference>
<dbReference type="Gene3D" id="2.60.40.10">
    <property type="entry name" value="Immunoglobulins"/>
    <property type="match status" value="1"/>
</dbReference>
<dbReference type="InterPro" id="IPR007110">
    <property type="entry name" value="Ig-like_dom"/>
</dbReference>
<dbReference type="InterPro" id="IPR036179">
    <property type="entry name" value="Ig-like_dom_sf"/>
</dbReference>
<dbReference type="InterPro" id="IPR013783">
    <property type="entry name" value="Ig-like_fold"/>
</dbReference>
<dbReference type="InterPro" id="IPR013106">
    <property type="entry name" value="Ig_V-set"/>
</dbReference>
<dbReference type="InterPro" id="IPR050150">
    <property type="entry name" value="IgV_Light_Chain"/>
</dbReference>
<dbReference type="PANTHER" id="PTHR23267">
    <property type="entry name" value="IMMUNOGLOBULIN LIGHT CHAIN"/>
    <property type="match status" value="1"/>
</dbReference>
<dbReference type="Pfam" id="PF07686">
    <property type="entry name" value="V-set"/>
    <property type="match status" value="1"/>
</dbReference>
<dbReference type="SMART" id="SM00406">
    <property type="entry name" value="IGv"/>
    <property type="match status" value="1"/>
</dbReference>
<dbReference type="SUPFAM" id="SSF48726">
    <property type="entry name" value="Immunoglobulin"/>
    <property type="match status" value="1"/>
</dbReference>
<dbReference type="PROSITE" id="PS50835">
    <property type="entry name" value="IG_LIKE"/>
    <property type="match status" value="1"/>
</dbReference>
<organism>
    <name type="scientific">Homo sapiens</name>
    <name type="common">Human</name>
    <dbReference type="NCBI Taxonomy" id="9606"/>
    <lineage>
        <taxon>Eukaryota</taxon>
        <taxon>Metazoa</taxon>
        <taxon>Chordata</taxon>
        <taxon>Craniata</taxon>
        <taxon>Vertebrata</taxon>
        <taxon>Euteleostomi</taxon>
        <taxon>Mammalia</taxon>
        <taxon>Eutheria</taxon>
        <taxon>Euarchontoglires</taxon>
        <taxon>Primates</taxon>
        <taxon>Haplorrhini</taxon>
        <taxon>Catarrhini</taxon>
        <taxon>Hominidae</taxon>
        <taxon>Homo</taxon>
    </lineage>
</organism>
<feature type="signal peptide" evidence="2">
    <location>
        <begin position="1"/>
        <end position="22"/>
    </location>
</feature>
<feature type="chain" id="PRO_5008198991" description="Immunoglobulin kappa variable 1D-8" evidence="2">
    <location>
        <begin position="23"/>
        <end position="117"/>
    </location>
</feature>
<feature type="domain" description="Ig-like" evidence="3">
    <location>
        <begin position="23"/>
        <end position="117" status="greater than"/>
    </location>
</feature>
<feature type="region of interest" description="Framework-1" evidence="1">
    <location>
        <begin position="23"/>
        <end position="45"/>
    </location>
</feature>
<feature type="region of interest" description="Complementarity-determining-1" evidence="1">
    <location>
        <begin position="46"/>
        <end position="56"/>
    </location>
</feature>
<feature type="region of interest" description="Framework-2" evidence="1">
    <location>
        <begin position="57"/>
        <end position="71"/>
    </location>
</feature>
<feature type="region of interest" description="Complementarity-determining-2" evidence="1">
    <location>
        <begin position="72"/>
        <end position="78"/>
    </location>
</feature>
<feature type="region of interest" description="Framework-3" evidence="1">
    <location>
        <begin position="79"/>
        <end position="110"/>
    </location>
</feature>
<feature type="region of interest" description="Complementarity-determining-3" evidence="1">
    <location>
        <begin position="111"/>
        <end position="117" status="greater than"/>
    </location>
</feature>
<feature type="disulfide bond" evidence="3">
    <location>
        <begin position="45"/>
        <end position="110"/>
    </location>
</feature>
<feature type="non-terminal residue">
    <location>
        <position position="117"/>
    </location>
</feature>